<sequence length="274" mass="28547">MRFAKGHGTENDFVILPDPDGELDLDAATVAALCDRRAGLGADGVLRVVRTKALDEPLTGEAATAQRCEWFMDYRNADGSVAEMCGNGVRVFARYLQEAGLVGAAAFEVGTRAGARHVVLEPDGNITVDMGPVRILGPGSARLADGPVHGTRISVGNPHLACRVARPVAEVDLSAPPLLRAEEFPQGANVEVFREVASGVLEMRVYERGAAETRSCGTGIVAAAAAATPPGEDARWTVRVPGGECTVVLESGAARLSGPAVIVAEGDVRLSALR</sequence>
<protein>
    <recommendedName>
        <fullName evidence="1">Diaminopimelate epimerase</fullName>
        <shortName evidence="1">DAP epimerase</shortName>
        <ecNumber evidence="1">5.1.1.7</ecNumber>
    </recommendedName>
    <alternativeName>
        <fullName evidence="1">PLP-independent amino acid racemase</fullName>
    </alternativeName>
</protein>
<comment type="function">
    <text evidence="1">Catalyzes the stereoinversion of LL-2,6-diaminopimelate (L,L-DAP) to meso-diaminopimelate (meso-DAP), a precursor of L-lysine and an essential component of the bacterial peptidoglycan.</text>
</comment>
<comment type="catalytic activity">
    <reaction evidence="1">
        <text>(2S,6S)-2,6-diaminopimelate = meso-2,6-diaminopimelate</text>
        <dbReference type="Rhea" id="RHEA:15393"/>
        <dbReference type="ChEBI" id="CHEBI:57609"/>
        <dbReference type="ChEBI" id="CHEBI:57791"/>
        <dbReference type="EC" id="5.1.1.7"/>
    </reaction>
</comment>
<comment type="pathway">
    <text evidence="1">Amino-acid biosynthesis; L-lysine biosynthesis via DAP pathway; DL-2,6-diaminopimelate from LL-2,6-diaminopimelate: step 1/1.</text>
</comment>
<comment type="subunit">
    <text evidence="1">Homodimer.</text>
</comment>
<comment type="subcellular location">
    <subcellularLocation>
        <location evidence="1">Cytoplasm</location>
    </subcellularLocation>
</comment>
<comment type="similarity">
    <text evidence="1">Belongs to the diaminopimelate epimerase family.</text>
</comment>
<keyword id="KW-0028">Amino-acid biosynthesis</keyword>
<keyword id="KW-0963">Cytoplasm</keyword>
<keyword id="KW-0413">Isomerase</keyword>
<keyword id="KW-0457">Lysine biosynthesis</keyword>
<dbReference type="EC" id="5.1.1.7" evidence="1"/>
<dbReference type="EMBL" id="CP000088">
    <property type="protein sequence ID" value="AAZ54854.1"/>
    <property type="molecule type" value="Genomic_DNA"/>
</dbReference>
<dbReference type="RefSeq" id="WP_011291263.1">
    <property type="nucleotide sequence ID" value="NC_007333.1"/>
</dbReference>
<dbReference type="SMR" id="Q47RR3"/>
<dbReference type="STRING" id="269800.Tfu_0816"/>
<dbReference type="KEGG" id="tfu:Tfu_0816"/>
<dbReference type="eggNOG" id="COG0253">
    <property type="taxonomic scope" value="Bacteria"/>
</dbReference>
<dbReference type="HOGENOM" id="CLU_053306_4_0_11"/>
<dbReference type="OrthoDB" id="9805408at2"/>
<dbReference type="UniPathway" id="UPA00034">
    <property type="reaction ID" value="UER00025"/>
</dbReference>
<dbReference type="GO" id="GO:0005829">
    <property type="term" value="C:cytosol"/>
    <property type="evidence" value="ECO:0007669"/>
    <property type="project" value="TreeGrafter"/>
</dbReference>
<dbReference type="GO" id="GO:0008837">
    <property type="term" value="F:diaminopimelate epimerase activity"/>
    <property type="evidence" value="ECO:0007669"/>
    <property type="project" value="UniProtKB-UniRule"/>
</dbReference>
<dbReference type="GO" id="GO:0009089">
    <property type="term" value="P:lysine biosynthetic process via diaminopimelate"/>
    <property type="evidence" value="ECO:0007669"/>
    <property type="project" value="UniProtKB-UniRule"/>
</dbReference>
<dbReference type="Gene3D" id="3.10.310.10">
    <property type="entry name" value="Diaminopimelate Epimerase, Chain A, domain 1"/>
    <property type="match status" value="2"/>
</dbReference>
<dbReference type="HAMAP" id="MF_00197">
    <property type="entry name" value="DAP_epimerase"/>
    <property type="match status" value="1"/>
</dbReference>
<dbReference type="InterPro" id="IPR018510">
    <property type="entry name" value="DAP_epimerase_AS"/>
</dbReference>
<dbReference type="InterPro" id="IPR001653">
    <property type="entry name" value="DAP_epimerase_DapF"/>
</dbReference>
<dbReference type="NCBIfam" id="TIGR00652">
    <property type="entry name" value="DapF"/>
    <property type="match status" value="1"/>
</dbReference>
<dbReference type="PANTHER" id="PTHR31689:SF0">
    <property type="entry name" value="DIAMINOPIMELATE EPIMERASE"/>
    <property type="match status" value="1"/>
</dbReference>
<dbReference type="PANTHER" id="PTHR31689">
    <property type="entry name" value="DIAMINOPIMELATE EPIMERASE, CHLOROPLASTIC"/>
    <property type="match status" value="1"/>
</dbReference>
<dbReference type="Pfam" id="PF01678">
    <property type="entry name" value="DAP_epimerase"/>
    <property type="match status" value="2"/>
</dbReference>
<dbReference type="SUPFAM" id="SSF54506">
    <property type="entry name" value="Diaminopimelate epimerase-like"/>
    <property type="match status" value="2"/>
</dbReference>
<dbReference type="PROSITE" id="PS01326">
    <property type="entry name" value="DAP_EPIMERASE"/>
    <property type="match status" value="1"/>
</dbReference>
<gene>
    <name evidence="1" type="primary">dapF</name>
    <name type="ordered locus">Tfu_0816</name>
</gene>
<feature type="chain" id="PRO_1000099270" description="Diaminopimelate epimerase">
    <location>
        <begin position="1"/>
        <end position="274"/>
    </location>
</feature>
<feature type="active site" description="Proton donor" evidence="1">
    <location>
        <position position="85"/>
    </location>
</feature>
<feature type="active site" description="Proton acceptor" evidence="1">
    <location>
        <position position="216"/>
    </location>
</feature>
<feature type="binding site" evidence="1">
    <location>
        <position position="11"/>
    </location>
    <ligand>
        <name>substrate</name>
    </ligand>
</feature>
<feature type="binding site" evidence="1">
    <location>
        <position position="76"/>
    </location>
    <ligand>
        <name>substrate</name>
    </ligand>
</feature>
<feature type="binding site" evidence="1">
    <location>
        <begin position="86"/>
        <end position="87"/>
    </location>
    <ligand>
        <name>substrate</name>
    </ligand>
</feature>
<feature type="binding site" evidence="1">
    <location>
        <position position="157"/>
    </location>
    <ligand>
        <name>substrate</name>
    </ligand>
</feature>
<feature type="binding site" evidence="1">
    <location>
        <position position="189"/>
    </location>
    <ligand>
        <name>substrate</name>
    </ligand>
</feature>
<feature type="binding site" evidence="1">
    <location>
        <begin position="207"/>
        <end position="208"/>
    </location>
    <ligand>
        <name>substrate</name>
    </ligand>
</feature>
<feature type="binding site" evidence="1">
    <location>
        <begin position="217"/>
        <end position="218"/>
    </location>
    <ligand>
        <name>substrate</name>
    </ligand>
</feature>
<feature type="site" description="Could be important to modulate the pK values of the two catalytic cysteine residues" evidence="1">
    <location>
        <position position="159"/>
    </location>
</feature>
<feature type="site" description="Could be important to modulate the pK values of the two catalytic cysteine residues" evidence="1">
    <location>
        <position position="207"/>
    </location>
</feature>
<evidence type="ECO:0000255" key="1">
    <source>
        <dbReference type="HAMAP-Rule" id="MF_00197"/>
    </source>
</evidence>
<organism>
    <name type="scientific">Thermobifida fusca (strain YX)</name>
    <dbReference type="NCBI Taxonomy" id="269800"/>
    <lineage>
        <taxon>Bacteria</taxon>
        <taxon>Bacillati</taxon>
        <taxon>Actinomycetota</taxon>
        <taxon>Actinomycetes</taxon>
        <taxon>Streptosporangiales</taxon>
        <taxon>Nocardiopsidaceae</taxon>
        <taxon>Thermobifida</taxon>
    </lineage>
</organism>
<name>DAPF_THEFY</name>
<proteinExistence type="inferred from homology"/>
<accession>Q47RR3</accession>
<reference key="1">
    <citation type="journal article" date="2007" name="J. Bacteriol.">
        <title>Genome sequence and analysis of the soil cellulolytic actinomycete Thermobifida fusca YX.</title>
        <authorList>
            <person name="Lykidis A."/>
            <person name="Mavromatis K."/>
            <person name="Ivanova N."/>
            <person name="Anderson I."/>
            <person name="Land M."/>
            <person name="DiBartolo G."/>
            <person name="Martinez M."/>
            <person name="Lapidus A."/>
            <person name="Lucas S."/>
            <person name="Copeland A."/>
            <person name="Richardson P."/>
            <person name="Wilson D.B."/>
            <person name="Kyrpides N."/>
        </authorList>
    </citation>
    <scope>NUCLEOTIDE SEQUENCE [LARGE SCALE GENOMIC DNA]</scope>
    <source>
        <strain>YX</strain>
    </source>
</reference>